<evidence type="ECO:0000255" key="1">
    <source>
        <dbReference type="HAMAP-Rule" id="MF_00082"/>
    </source>
</evidence>
<name>ARGB_BACC4</name>
<protein>
    <recommendedName>
        <fullName evidence="1">Acetylglutamate kinase</fullName>
        <ecNumber evidence="1">2.7.2.8</ecNumber>
    </recommendedName>
    <alternativeName>
        <fullName evidence="1">N-acetyl-L-glutamate 5-phosphotransferase</fullName>
    </alternativeName>
    <alternativeName>
        <fullName evidence="1">NAG kinase</fullName>
        <shortName evidence="1">NAGK</shortName>
    </alternativeName>
</protein>
<keyword id="KW-0028">Amino-acid biosynthesis</keyword>
<keyword id="KW-0055">Arginine biosynthesis</keyword>
<keyword id="KW-0067">ATP-binding</keyword>
<keyword id="KW-0963">Cytoplasm</keyword>
<keyword id="KW-0418">Kinase</keyword>
<keyword id="KW-0547">Nucleotide-binding</keyword>
<keyword id="KW-0808">Transferase</keyword>
<dbReference type="EC" id="2.7.2.8" evidence="1"/>
<dbReference type="EMBL" id="CP001176">
    <property type="protein sequence ID" value="ACK62826.1"/>
    <property type="molecule type" value="Genomic_DNA"/>
</dbReference>
<dbReference type="RefSeq" id="WP_001286793.1">
    <property type="nucleotide sequence ID" value="NC_011725.1"/>
</dbReference>
<dbReference type="SMR" id="B7HB02"/>
<dbReference type="KEGG" id="bcb:BCB4264_A4240"/>
<dbReference type="HOGENOM" id="CLU_053680_1_0_9"/>
<dbReference type="UniPathway" id="UPA00068">
    <property type="reaction ID" value="UER00107"/>
</dbReference>
<dbReference type="Proteomes" id="UP000007096">
    <property type="component" value="Chromosome"/>
</dbReference>
<dbReference type="GO" id="GO:0005737">
    <property type="term" value="C:cytoplasm"/>
    <property type="evidence" value="ECO:0007669"/>
    <property type="project" value="UniProtKB-SubCell"/>
</dbReference>
<dbReference type="GO" id="GO:0003991">
    <property type="term" value="F:acetylglutamate kinase activity"/>
    <property type="evidence" value="ECO:0007669"/>
    <property type="project" value="UniProtKB-UniRule"/>
</dbReference>
<dbReference type="GO" id="GO:0005524">
    <property type="term" value="F:ATP binding"/>
    <property type="evidence" value="ECO:0007669"/>
    <property type="project" value="UniProtKB-UniRule"/>
</dbReference>
<dbReference type="GO" id="GO:0042450">
    <property type="term" value="P:arginine biosynthetic process via ornithine"/>
    <property type="evidence" value="ECO:0007669"/>
    <property type="project" value="UniProtKB-UniRule"/>
</dbReference>
<dbReference type="GO" id="GO:0006526">
    <property type="term" value="P:L-arginine biosynthetic process"/>
    <property type="evidence" value="ECO:0007669"/>
    <property type="project" value="UniProtKB-UniPathway"/>
</dbReference>
<dbReference type="CDD" id="cd04238">
    <property type="entry name" value="AAK_NAGK-like"/>
    <property type="match status" value="1"/>
</dbReference>
<dbReference type="FunFam" id="3.40.1160.10:FF:000034">
    <property type="entry name" value="Acetylglutamate kinase"/>
    <property type="match status" value="1"/>
</dbReference>
<dbReference type="Gene3D" id="3.40.1160.10">
    <property type="entry name" value="Acetylglutamate kinase-like"/>
    <property type="match status" value="1"/>
</dbReference>
<dbReference type="HAMAP" id="MF_00082">
    <property type="entry name" value="ArgB"/>
    <property type="match status" value="1"/>
</dbReference>
<dbReference type="InterPro" id="IPR036393">
    <property type="entry name" value="AceGlu_kinase-like_sf"/>
</dbReference>
<dbReference type="InterPro" id="IPR004662">
    <property type="entry name" value="AcgluKinase_fam"/>
</dbReference>
<dbReference type="InterPro" id="IPR037528">
    <property type="entry name" value="ArgB"/>
</dbReference>
<dbReference type="InterPro" id="IPR001048">
    <property type="entry name" value="Asp/Glu/Uridylate_kinase"/>
</dbReference>
<dbReference type="NCBIfam" id="TIGR00761">
    <property type="entry name" value="argB"/>
    <property type="match status" value="1"/>
</dbReference>
<dbReference type="PANTHER" id="PTHR23342">
    <property type="entry name" value="N-ACETYLGLUTAMATE SYNTHASE"/>
    <property type="match status" value="1"/>
</dbReference>
<dbReference type="PANTHER" id="PTHR23342:SF0">
    <property type="entry name" value="N-ACETYLGLUTAMATE SYNTHASE, MITOCHONDRIAL"/>
    <property type="match status" value="1"/>
</dbReference>
<dbReference type="Pfam" id="PF00696">
    <property type="entry name" value="AA_kinase"/>
    <property type="match status" value="1"/>
</dbReference>
<dbReference type="PIRSF" id="PIRSF000728">
    <property type="entry name" value="NAGK"/>
    <property type="match status" value="1"/>
</dbReference>
<dbReference type="PRINTS" id="PR01469">
    <property type="entry name" value="CARBMTKINASE"/>
</dbReference>
<dbReference type="SUPFAM" id="SSF53633">
    <property type="entry name" value="Carbamate kinase-like"/>
    <property type="match status" value="1"/>
</dbReference>
<reference key="1">
    <citation type="submission" date="2008-10" db="EMBL/GenBank/DDBJ databases">
        <title>Genome sequence of Bacillus cereus B4264.</title>
        <authorList>
            <person name="Dodson R.J."/>
            <person name="Durkin A.S."/>
            <person name="Rosovitz M.J."/>
            <person name="Rasko D.A."/>
            <person name="Hoffmaster A."/>
            <person name="Ravel J."/>
            <person name="Sutton G."/>
        </authorList>
    </citation>
    <scope>NUCLEOTIDE SEQUENCE [LARGE SCALE GENOMIC DNA]</scope>
    <source>
        <strain>B4264</strain>
    </source>
</reference>
<feature type="chain" id="PRO_1000117118" description="Acetylglutamate kinase">
    <location>
        <begin position="1"/>
        <end position="255"/>
    </location>
</feature>
<feature type="binding site" evidence="1">
    <location>
        <begin position="40"/>
        <end position="41"/>
    </location>
    <ligand>
        <name>substrate</name>
    </ligand>
</feature>
<feature type="binding site" evidence="1">
    <location>
        <position position="62"/>
    </location>
    <ligand>
        <name>substrate</name>
    </ligand>
</feature>
<feature type="binding site" evidence="1">
    <location>
        <position position="153"/>
    </location>
    <ligand>
        <name>substrate</name>
    </ligand>
</feature>
<feature type="site" description="Transition state stabilizer" evidence="1">
    <location>
        <position position="8"/>
    </location>
</feature>
<feature type="site" description="Transition state stabilizer" evidence="1">
    <location>
        <position position="212"/>
    </location>
</feature>
<gene>
    <name evidence="1" type="primary">argB</name>
    <name type="ordered locus">BCB4264_A4240</name>
</gene>
<comment type="function">
    <text evidence="1">Catalyzes the ATP-dependent phosphorylation of N-acetyl-L-glutamate.</text>
</comment>
<comment type="catalytic activity">
    <reaction evidence="1">
        <text>N-acetyl-L-glutamate + ATP = N-acetyl-L-glutamyl 5-phosphate + ADP</text>
        <dbReference type="Rhea" id="RHEA:14629"/>
        <dbReference type="ChEBI" id="CHEBI:30616"/>
        <dbReference type="ChEBI" id="CHEBI:44337"/>
        <dbReference type="ChEBI" id="CHEBI:57936"/>
        <dbReference type="ChEBI" id="CHEBI:456216"/>
        <dbReference type="EC" id="2.7.2.8"/>
    </reaction>
</comment>
<comment type="pathway">
    <text evidence="1">Amino-acid biosynthesis; L-arginine biosynthesis; N(2)-acetyl-L-ornithine from L-glutamate: step 2/4.</text>
</comment>
<comment type="subcellular location">
    <subcellularLocation>
        <location evidence="1">Cytoplasm</location>
    </subcellularLocation>
</comment>
<comment type="similarity">
    <text evidence="1">Belongs to the acetylglutamate kinase family. ArgB subfamily.</text>
</comment>
<accession>B7HB02</accession>
<organism>
    <name type="scientific">Bacillus cereus (strain B4264)</name>
    <dbReference type="NCBI Taxonomy" id="405532"/>
    <lineage>
        <taxon>Bacteria</taxon>
        <taxon>Bacillati</taxon>
        <taxon>Bacillota</taxon>
        <taxon>Bacilli</taxon>
        <taxon>Bacillales</taxon>
        <taxon>Bacillaceae</taxon>
        <taxon>Bacillus</taxon>
        <taxon>Bacillus cereus group</taxon>
    </lineage>
</organism>
<sequence>MSDYIVVKCGGSMLNQLNDVFFDCIKKLQQKYKVVIVHGGGPEIDAKLKDCNINVEKRDGLRITPKEVMDVVQMVLCGSTNKKLVMNLQKHNLLAVGCSGCDGNLLQVQPVSEEIGYVGEVSYVETALLKGLINMGYIPVIAPIGVNGNEIYNINADNAAAGIAATLGAKELIFITDVDGILHEGNLVKETDESEIATFIETGVITGGMIPKVQAALASLKMGVQKISIVNGTKDFTEVTGECIGTTVTKGVSIA</sequence>
<proteinExistence type="inferred from homology"/>